<evidence type="ECO:0000250" key="1">
    <source>
        <dbReference type="UniProtKB" id="P35268"/>
    </source>
</evidence>
<evidence type="ECO:0000305" key="2"/>
<sequence length="128" mass="14757">MAPLKKPAVKGGKKKKQVLKFTLDCTHPVEDGIMDAANFEQFLQERIKVNGKAGNLGGGVVSIERSKSKITVTSDIPFSKRYLKYLTKKYLKKNNLRDWLRVVANTKESYELRYFQINQDEEEEEDED</sequence>
<feature type="chain" id="PRO_0000240439" description="Large ribosomal subunit protein eL22">
    <location>
        <begin position="1"/>
        <end position="128"/>
    </location>
</feature>
<gene>
    <name type="primary">rpl22</name>
</gene>
<organism>
    <name type="scientific">Ictalurus punctatus</name>
    <name type="common">Channel catfish</name>
    <name type="synonym">Silurus punctatus</name>
    <dbReference type="NCBI Taxonomy" id="7998"/>
    <lineage>
        <taxon>Eukaryota</taxon>
        <taxon>Metazoa</taxon>
        <taxon>Chordata</taxon>
        <taxon>Craniata</taxon>
        <taxon>Vertebrata</taxon>
        <taxon>Euteleostomi</taxon>
        <taxon>Actinopterygii</taxon>
        <taxon>Neopterygii</taxon>
        <taxon>Teleostei</taxon>
        <taxon>Ostariophysi</taxon>
        <taxon>Siluriformes</taxon>
        <taxon>Ictaluridae</taxon>
        <taxon>Ictalurus</taxon>
    </lineage>
</organism>
<protein>
    <recommendedName>
        <fullName evidence="2">Large ribosomal subunit protein eL22</fullName>
    </recommendedName>
    <alternativeName>
        <fullName>60S ribosomal protein L22</fullName>
    </alternativeName>
</protein>
<reference key="1">
    <citation type="journal article" date="2003" name="Gene">
        <title>Translational machinery of channel catfish: II. Complementary DNA and expression of the complete set of 47 60S ribosomal proteins.</title>
        <authorList>
            <person name="Patterson A.P."/>
            <person name="Karsi A."/>
            <person name="Feng J."/>
            <person name="Liu Z.J."/>
        </authorList>
    </citation>
    <scope>NUCLEOTIDE SEQUENCE [MRNA]</scope>
</reference>
<comment type="function">
    <text evidence="1">Component of the large ribosomal subunit. The ribosome is a large ribonucleoprotein complex responsible for the synthesis of proteins in the cell.</text>
</comment>
<comment type="subunit">
    <text evidence="1">Component of the large ribosomal subunit.</text>
</comment>
<comment type="subcellular location">
    <subcellularLocation>
        <location evidence="1">Cytoplasm</location>
    </subcellularLocation>
</comment>
<comment type="similarity">
    <text evidence="2">Belongs to the eukaryotic ribosomal protein eL22 family.</text>
</comment>
<dbReference type="EMBL" id="AF401576">
    <property type="protein sequence ID" value="AAK95148.1"/>
    <property type="molecule type" value="mRNA"/>
</dbReference>
<dbReference type="RefSeq" id="NP_001187048.1">
    <property type="nucleotide sequence ID" value="NM_001200119.1"/>
</dbReference>
<dbReference type="RefSeq" id="XP_053529850.1">
    <property type="nucleotide sequence ID" value="XM_053673875.1"/>
</dbReference>
<dbReference type="SMR" id="Q90YU6"/>
<dbReference type="STRING" id="7998.ENSIPUP00000007863"/>
<dbReference type="GeneID" id="100304536"/>
<dbReference type="KEGG" id="ipu:100304536"/>
<dbReference type="CTD" id="6146"/>
<dbReference type="OrthoDB" id="10259820at2759"/>
<dbReference type="Proteomes" id="UP000221080">
    <property type="component" value="Chromosome 21"/>
</dbReference>
<dbReference type="GO" id="GO:0005737">
    <property type="term" value="C:cytoplasm"/>
    <property type="evidence" value="ECO:0007669"/>
    <property type="project" value="UniProtKB-SubCell"/>
</dbReference>
<dbReference type="GO" id="GO:1990904">
    <property type="term" value="C:ribonucleoprotein complex"/>
    <property type="evidence" value="ECO:0007669"/>
    <property type="project" value="UniProtKB-KW"/>
</dbReference>
<dbReference type="GO" id="GO:0005840">
    <property type="term" value="C:ribosome"/>
    <property type="evidence" value="ECO:0007669"/>
    <property type="project" value="UniProtKB-KW"/>
</dbReference>
<dbReference type="GO" id="GO:0003723">
    <property type="term" value="F:RNA binding"/>
    <property type="evidence" value="ECO:0007669"/>
    <property type="project" value="TreeGrafter"/>
</dbReference>
<dbReference type="GO" id="GO:0003735">
    <property type="term" value="F:structural constituent of ribosome"/>
    <property type="evidence" value="ECO:0007669"/>
    <property type="project" value="InterPro"/>
</dbReference>
<dbReference type="GO" id="GO:0002181">
    <property type="term" value="P:cytoplasmic translation"/>
    <property type="evidence" value="ECO:0007669"/>
    <property type="project" value="TreeGrafter"/>
</dbReference>
<dbReference type="FunFam" id="3.30.1360.210:FF:000001">
    <property type="entry name" value="60S ribosomal protein L22 1"/>
    <property type="match status" value="1"/>
</dbReference>
<dbReference type="Gene3D" id="3.30.1360.210">
    <property type="match status" value="1"/>
</dbReference>
<dbReference type="InterPro" id="IPR002671">
    <property type="entry name" value="Ribosomal_eL22"/>
</dbReference>
<dbReference type="InterPro" id="IPR038526">
    <property type="entry name" value="Ribosomal_eL22_sf"/>
</dbReference>
<dbReference type="PANTHER" id="PTHR10064">
    <property type="entry name" value="60S RIBOSOMAL PROTEIN L22"/>
    <property type="match status" value="1"/>
</dbReference>
<dbReference type="PANTHER" id="PTHR10064:SF2">
    <property type="entry name" value="LARGE RIBOSOMAL SUBUNIT PROTEIN EL22"/>
    <property type="match status" value="1"/>
</dbReference>
<dbReference type="Pfam" id="PF01776">
    <property type="entry name" value="Ribosomal_L22e"/>
    <property type="match status" value="1"/>
</dbReference>
<name>RL22_ICTPU</name>
<proteinExistence type="evidence at transcript level"/>
<accession>Q90YU6</accession>
<keyword id="KW-0963">Cytoplasm</keyword>
<keyword id="KW-0687">Ribonucleoprotein</keyword>
<keyword id="KW-0689">Ribosomal protein</keyword>